<gene>
    <name type="primary">draA</name>
</gene>
<reference key="1">
    <citation type="journal article" date="1991" name="Infect. Immun.">
        <title>Molecular structure of the Dr adhesin: nucleotide sequence and mapping of receptor-binding domain by use of fusion constructs.</title>
        <authorList>
            <person name="Swanson T.S."/>
            <person name="Bilge S.S."/>
            <person name="Nowicki B."/>
            <person name="Moseley S.L."/>
        </authorList>
    </citation>
    <scope>NUCLEOTIDE SEQUENCE [GENOMIC DNA]</scope>
    <source>
        <strain>Serotype O75</strain>
    </source>
</reference>
<reference key="2">
    <citation type="journal article" date="1990" name="Infect. Immun.">
        <title>Purification and characterization of the Dr hemagglutinins expressed by two uropathogenic Escherichia coli strains.</title>
        <authorList>
            <person name="Kist M.L."/>
            <person name="Salit I.E."/>
            <person name="Hoffman T."/>
        </authorList>
    </citation>
    <scope>PROTEIN SEQUENCE OF 22-46</scope>
    <source>
        <strain>5026</strain>
        <strain>950</strain>
    </source>
</reference>
<proteinExistence type="evidence at protein level"/>
<keyword id="KW-0002">3D-structure</keyword>
<keyword id="KW-0903">Direct protein sequencing</keyword>
<keyword id="KW-0281">Fimbrium</keyword>
<keyword id="KW-0732">Signal</keyword>
<protein>
    <recommendedName>
        <fullName>Dr hemagglutinin structural subunit</fullName>
    </recommendedName>
</protein>
<accession>P24093</accession>
<sequence length="160" mass="17058">MKKLAIMAAASMVFAVSSAHAGFTPSGTTGTTKLTVTEECQVRVGDLTVAKTRGQLTDAAPIGPVTVQALGCDARQVALKADTDNFEQGKFFLISDNNRDKLYVNIRPTDNSAWTTDNGVFYKNDVGSWGGIIGIYVDGQQTNTPPGNYTLTLTGGYWAK</sequence>
<comment type="function">
    <text>Hemagglutinins of uropathogenic E.coli mediate adherence to the upper urinary tract. These adhesins bind to the Dr blood group antigen and also agglutinate human erythrocytes in the presence of D-mannose (mannose-resistant hemagglutination (MRHA)).</text>
</comment>
<comment type="subcellular location">
    <subcellularLocation>
        <location>Fimbrium</location>
    </subcellularLocation>
</comment>
<comment type="similarity">
    <text evidence="3">Belongs to the Dr-adhesin family.</text>
</comment>
<dbReference type="EMBL" id="M62834">
    <property type="protein sequence ID" value="AAA23709.1"/>
    <property type="molecule type" value="Genomic_DNA"/>
</dbReference>
<dbReference type="RefSeq" id="WP_063269203.1">
    <property type="nucleotide sequence ID" value="NZ_CP104845.1"/>
</dbReference>
<dbReference type="PDB" id="1USQ">
    <property type="method" value="X-ray"/>
    <property type="resolution" value="1.90 A"/>
    <property type="chains" value="A/B/C/D/E/F=21-160"/>
</dbReference>
<dbReference type="PDB" id="1UT1">
    <property type="method" value="X-ray"/>
    <property type="resolution" value="1.70 A"/>
    <property type="chains" value="A/B/C/D/E/F=21-160"/>
</dbReference>
<dbReference type="PDB" id="2JKJ">
    <property type="method" value="X-ray"/>
    <property type="resolution" value="2.30 A"/>
    <property type="chains" value="A/B/C/D/E/F=23-160"/>
</dbReference>
<dbReference type="PDB" id="2JKL">
    <property type="method" value="X-ray"/>
    <property type="resolution" value="1.90 A"/>
    <property type="chains" value="A/B/C/D/E/F=23-160"/>
</dbReference>
<dbReference type="PDB" id="2JKN">
    <property type="method" value="X-ray"/>
    <property type="resolution" value="1.90 A"/>
    <property type="chains" value="A/B/C/D/E/F=23-160"/>
</dbReference>
<dbReference type="PDB" id="2W5P">
    <property type="method" value="X-ray"/>
    <property type="resolution" value="1.90 A"/>
    <property type="chains" value="A/B/C=23-160"/>
</dbReference>
<dbReference type="PDBsum" id="1USQ"/>
<dbReference type="PDBsum" id="1UT1"/>
<dbReference type="PDBsum" id="2JKJ"/>
<dbReference type="PDBsum" id="2JKL"/>
<dbReference type="PDBsum" id="2JKN"/>
<dbReference type="PDBsum" id="2W5P"/>
<dbReference type="BMRB" id="P24093"/>
<dbReference type="SMR" id="P24093"/>
<dbReference type="DrugBank" id="DB07492">
    <property type="generic name" value="Bromamphenicol"/>
</dbReference>
<dbReference type="DrugBank" id="DB00446">
    <property type="generic name" value="Chloramphenicol"/>
</dbReference>
<dbReference type="DrugBank" id="DB07565">
    <property type="generic name" value="Chloramphenicol succinate"/>
</dbReference>
<dbReference type="DrugBank" id="DB08621">
    <property type="generic name" value="Thiamphenicol"/>
</dbReference>
<dbReference type="EvolutionaryTrace" id="P24093"/>
<dbReference type="GO" id="GO:0009289">
    <property type="term" value="C:pilus"/>
    <property type="evidence" value="ECO:0007669"/>
    <property type="project" value="UniProtKB-SubCell"/>
</dbReference>
<dbReference type="Gene3D" id="2.60.40.1570">
    <property type="entry name" value="Dr adhesin"/>
    <property type="match status" value="1"/>
</dbReference>
<dbReference type="InterPro" id="IPR006713">
    <property type="entry name" value="Adhesin_Dr"/>
</dbReference>
<dbReference type="InterPro" id="IPR021020">
    <property type="entry name" value="Adhesin_Dr_signal_peptide"/>
</dbReference>
<dbReference type="InterPro" id="IPR008966">
    <property type="entry name" value="Adhesion_dom_sf"/>
</dbReference>
<dbReference type="InterPro" id="IPR037028">
    <property type="entry name" value="Dr_adhesin_sf"/>
</dbReference>
<dbReference type="Pfam" id="PF04619">
    <property type="entry name" value="Adhesin_Dr"/>
    <property type="match status" value="1"/>
</dbReference>
<dbReference type="Pfam" id="PF12393">
    <property type="entry name" value="Dr_adhesin"/>
    <property type="match status" value="1"/>
</dbReference>
<dbReference type="SUPFAM" id="SSF49401">
    <property type="entry name" value="Bacterial adhesins"/>
    <property type="match status" value="1"/>
</dbReference>
<name>DRAA_ECOLX</name>
<feature type="signal peptide" evidence="2">
    <location>
        <begin position="1"/>
        <end position="21"/>
    </location>
</feature>
<feature type="chain" id="PRO_0000000874" description="Dr hemagglutinin structural subunit">
    <location>
        <begin position="22"/>
        <end position="160"/>
    </location>
</feature>
<feature type="region of interest" description="Receptor-binding" evidence="1">
    <location>
        <begin position="22"/>
        <end position="75"/>
    </location>
</feature>
<feature type="sequence variant" description="In strain: 950 and 5026.">
    <original>R</original>
    <variation>Y</variation>
    <location>
        <position position="43"/>
    </location>
</feature>
<feature type="strand" evidence="4">
    <location>
        <begin position="22"/>
        <end position="37"/>
    </location>
</feature>
<feature type="strand" evidence="4">
    <location>
        <begin position="39"/>
        <end position="46"/>
    </location>
</feature>
<feature type="strand" evidence="4">
    <location>
        <begin position="50"/>
        <end position="52"/>
    </location>
</feature>
<feature type="helix" evidence="4">
    <location>
        <begin position="53"/>
        <end position="55"/>
    </location>
</feature>
<feature type="strand" evidence="4">
    <location>
        <begin position="61"/>
        <end position="71"/>
    </location>
</feature>
<feature type="strand" evidence="4">
    <location>
        <begin position="75"/>
        <end position="81"/>
    </location>
</feature>
<feature type="helix" evidence="4">
    <location>
        <begin position="83"/>
        <end position="85"/>
    </location>
</feature>
<feature type="strand" evidence="4">
    <location>
        <begin position="90"/>
        <end position="95"/>
    </location>
</feature>
<feature type="strand" evidence="4">
    <location>
        <begin position="101"/>
        <end position="111"/>
    </location>
</feature>
<feature type="strand" evidence="4">
    <location>
        <begin position="114"/>
        <end position="117"/>
    </location>
</feature>
<feature type="strand" evidence="4">
    <location>
        <begin position="120"/>
        <end position="125"/>
    </location>
</feature>
<feature type="strand" evidence="4">
    <location>
        <begin position="130"/>
        <end position="139"/>
    </location>
</feature>
<feature type="strand" evidence="4">
    <location>
        <begin position="146"/>
        <end position="159"/>
    </location>
</feature>
<evidence type="ECO:0000255" key="1"/>
<evidence type="ECO:0000269" key="2">
    <source>
    </source>
</evidence>
<evidence type="ECO:0000305" key="3"/>
<evidence type="ECO:0007829" key="4">
    <source>
        <dbReference type="PDB" id="1UT1"/>
    </source>
</evidence>
<organism>
    <name type="scientific">Escherichia coli</name>
    <dbReference type="NCBI Taxonomy" id="562"/>
    <lineage>
        <taxon>Bacteria</taxon>
        <taxon>Pseudomonadati</taxon>
        <taxon>Pseudomonadota</taxon>
        <taxon>Gammaproteobacteria</taxon>
        <taxon>Enterobacterales</taxon>
        <taxon>Enterobacteriaceae</taxon>
        <taxon>Escherichia</taxon>
    </lineage>
</organism>